<evidence type="ECO:0000250" key="1"/>
<evidence type="ECO:0000305" key="2"/>
<protein>
    <recommendedName>
        <fullName>Virion release protein</fullName>
    </recommendedName>
    <alternativeName>
        <fullName>Protein F12 homolog</fullName>
    </alternativeName>
</protein>
<organism>
    <name type="scientific">Fowlpox virus (strain NVSL)</name>
    <name type="common">FPV</name>
    <dbReference type="NCBI Taxonomy" id="928301"/>
    <lineage>
        <taxon>Viruses</taxon>
        <taxon>Varidnaviria</taxon>
        <taxon>Bamfordvirae</taxon>
        <taxon>Nucleocytoviricota</taxon>
        <taxon>Pokkesviricetes</taxon>
        <taxon>Chitovirales</taxon>
        <taxon>Poxviridae</taxon>
        <taxon>Chordopoxvirinae</taxon>
        <taxon>Avipoxvirus</taxon>
        <taxon>Fowlpox virus</taxon>
    </lineage>
</organism>
<proteinExistence type="inferred from homology"/>
<keyword id="KW-1039">Host endosome</keyword>
<keyword id="KW-0426">Late protein</keyword>
<keyword id="KW-0472">Membrane</keyword>
<keyword id="KW-1185">Reference proteome</keyword>
<keyword id="KW-0946">Virion</keyword>
<keyword id="KW-0843">Virulence</keyword>
<organismHost>
    <name type="scientific">Vertebrata</name>
    <dbReference type="NCBI Taxonomy" id="7742"/>
</organismHost>
<reference key="1">
    <citation type="journal article" date="1993" name="J. Gen. Virol.">
        <title>Insertional inactivation of a fowlpox virus homologue of the vaccinia virus F12L gene inhibits the release of enveloped virions.</title>
        <authorList>
            <person name="Ogawa R."/>
            <person name="Calvert J.G."/>
            <person name="Yanagida N."/>
            <person name="Nazerian K."/>
        </authorList>
    </citation>
    <scope>NUCLEOTIDE SEQUENCE [GENOMIC DNA]</scope>
</reference>
<reference key="2">
    <citation type="journal article" date="2000" name="J. Virol.">
        <title>The genome of fowlpox virus.</title>
        <authorList>
            <person name="Afonso C.L."/>
            <person name="Tulman E.R."/>
            <person name="Lu Z."/>
            <person name="Zsak L."/>
            <person name="Kutish G.F."/>
            <person name="Rock D.L."/>
        </authorList>
    </citation>
    <scope>NUCLEOTIDE SEQUENCE [LARGE SCALE GENOMIC DNA]</scope>
</reference>
<sequence length="630" mass="74099">MALIEQLQSSEQSILSPFRYYGFKDFHNVIFTTIDDETLIVITVNNVPLVTRLITFEKITFFRSFNSTCIITSNNNSDIDTDTYFIPNSLSLLDILKKRAYDVELRDLSFAIMSEMNNDELRNSDIVSLNKWLHKHNLLDYKLVLISDIDRRYKLYNKKNTIIDVISVNGRNYNIWVKDVIEYYSPEYLRWSIDIKRATESNNWLPYSQSINPLNENIYAFEFIATLERSNERLNIGAIFLYPDIIITGRNNEDIIEKFLDQLEEVIYKKNSDSIVLTGYHLTFLENTILERYISKYKDWIFTCNRLVHCKTGTEVFLFDAAIFFPSSNKKGYVKHWTGKKLNFKNFFQKDSQLEKYINNNSVAERIYYLQSSLHKHISCLIEIFELNGFDFNFSGLLDILIFSIRVKNNNGNYYYPKHSSAVNLMLSSIYTDYYAIDDIDKDSKKLVFNSIFPLIMEGYYPEGKPYYTKTPKEGYLSICLCDVEISNDIKNPILYCKENKSARKFTGVFTSVDIDTAVKLRGYKIKILECIEWPNKIKLFDNICYLNKLFIEHQDYTHDEKSLQGYLFSYLLKGNVTEDVLAMKSCRNNLSIISFIISYCRNYTYKLLECPVYESSNIVKCKYNQVIYK</sequence>
<accession>P36317</accession>
<comment type="function">
    <text evidence="1">Late protein that plays a role in intracellular enveloped virus (IEV) transport to the cell surface on microtubules. When absent, viral morphogenesis halts after the formation of IEV particles, and these are not transported to the cell periphery. Important for plaque formation, extracellular envelope virus (EEV) production and virulence (By similarity).</text>
</comment>
<comment type="subcellular location">
    <subcellularLocation>
        <location evidence="1">Virion membrane</location>
    </subcellularLocation>
    <subcellularLocation>
        <location evidence="1">Host endosome</location>
    </subcellularLocation>
    <text evidence="1">Associates with the membrane of IEV particles, but not intracellular mature virus (IMV), cell-associated enveloped virus (CEV) or EEV. Colocalizes with microtubules (By similarity).</text>
</comment>
<comment type="PTM">
    <text evidence="1">Not glycosylated or contains very little carbohydrate.</text>
</comment>
<comment type="similarity">
    <text evidence="2">Belongs to the poxviridae F12 protein family.</text>
</comment>
<name>F12_FOWPN</name>
<gene>
    <name type="ordered locus">FPV109</name>
</gene>
<dbReference type="EMBL" id="M88588">
    <property type="protein sequence ID" value="AAA47187.1"/>
    <property type="molecule type" value="Genomic_DNA"/>
</dbReference>
<dbReference type="EMBL" id="M88587">
    <property type="protein sequence ID" value="AAA43820.1"/>
    <property type="molecule type" value="Genomic_DNA"/>
</dbReference>
<dbReference type="EMBL" id="AF198100">
    <property type="protein sequence ID" value="AAF44453.1"/>
    <property type="molecule type" value="Genomic_DNA"/>
</dbReference>
<dbReference type="PIR" id="JQ1894">
    <property type="entry name" value="JQ1894"/>
</dbReference>
<dbReference type="RefSeq" id="NP_039072.1">
    <property type="nucleotide sequence ID" value="NC_002188.1"/>
</dbReference>
<dbReference type="GeneID" id="1486657"/>
<dbReference type="KEGG" id="vg:1486657"/>
<dbReference type="Proteomes" id="UP000008597">
    <property type="component" value="Segment"/>
</dbReference>
<dbReference type="GO" id="GO:0044174">
    <property type="term" value="C:host cell endosome"/>
    <property type="evidence" value="ECO:0007669"/>
    <property type="project" value="UniProtKB-SubCell"/>
</dbReference>
<dbReference type="GO" id="GO:0016020">
    <property type="term" value="C:membrane"/>
    <property type="evidence" value="ECO:0007669"/>
    <property type="project" value="UniProtKB-KW"/>
</dbReference>
<dbReference type="GO" id="GO:0055036">
    <property type="term" value="C:virion membrane"/>
    <property type="evidence" value="ECO:0007669"/>
    <property type="project" value="UniProtKB-SubCell"/>
</dbReference>
<dbReference type="GO" id="GO:0003677">
    <property type="term" value="F:DNA binding"/>
    <property type="evidence" value="ECO:0007669"/>
    <property type="project" value="InterPro"/>
</dbReference>
<dbReference type="GO" id="GO:0006355">
    <property type="term" value="P:regulation of DNA-templated transcription"/>
    <property type="evidence" value="ECO:0007669"/>
    <property type="project" value="InterPro"/>
</dbReference>
<dbReference type="GO" id="GO:0016032">
    <property type="term" value="P:viral process"/>
    <property type="evidence" value="ECO:0007669"/>
    <property type="project" value="InterPro"/>
</dbReference>
<dbReference type="InterPro" id="IPR005005">
    <property type="entry name" value="Poxvirus_F12L"/>
</dbReference>
<dbReference type="InterPro" id="IPR008917">
    <property type="entry name" value="TF_DNA-bd_sf"/>
</dbReference>
<dbReference type="Pfam" id="PF03337">
    <property type="entry name" value="Pox_F12L"/>
    <property type="match status" value="1"/>
</dbReference>
<dbReference type="PIRSF" id="PIRSF015793">
    <property type="entry name" value="VAC_EEV"/>
    <property type="match status" value="1"/>
</dbReference>
<dbReference type="SUPFAM" id="SSF47454">
    <property type="entry name" value="A DNA-binding domain in eukaryotic transcription factors"/>
    <property type="match status" value="1"/>
</dbReference>
<feature type="chain" id="PRO_0000099505" description="Virion release protein">
    <location>
        <begin position="1"/>
        <end position="630"/>
    </location>
</feature>